<name>RS2_COXBR</name>
<reference key="1">
    <citation type="submission" date="2007-11" db="EMBL/GenBank/DDBJ databases">
        <title>Genome sequencing of phylogenetically and phenotypically diverse Coxiella burnetii isolates.</title>
        <authorList>
            <person name="Seshadri R."/>
            <person name="Samuel J.E."/>
        </authorList>
    </citation>
    <scope>NUCLEOTIDE SEQUENCE [LARGE SCALE GENOMIC DNA]</scope>
    <source>
        <strain>RSA 331 / Henzerling II</strain>
    </source>
</reference>
<comment type="similarity">
    <text evidence="1">Belongs to the universal ribosomal protein uS2 family.</text>
</comment>
<gene>
    <name evidence="1" type="primary">rpsB</name>
    <name type="ordered locus">COXBURSA331_A1545</name>
</gene>
<accession>A9N8R0</accession>
<organism>
    <name type="scientific">Coxiella burnetii (strain RSA 331 / Henzerling II)</name>
    <dbReference type="NCBI Taxonomy" id="360115"/>
    <lineage>
        <taxon>Bacteria</taxon>
        <taxon>Pseudomonadati</taxon>
        <taxon>Pseudomonadota</taxon>
        <taxon>Gammaproteobacteria</taxon>
        <taxon>Legionellales</taxon>
        <taxon>Coxiellaceae</taxon>
        <taxon>Coxiella</taxon>
    </lineage>
</organism>
<feature type="chain" id="PRO_1000078877" description="Small ribosomal subunit protein uS2">
    <location>
        <begin position="1"/>
        <end position="313"/>
    </location>
</feature>
<feature type="region of interest" description="Disordered" evidence="2">
    <location>
        <begin position="234"/>
        <end position="313"/>
    </location>
</feature>
<feature type="compositionally biased region" description="Basic and acidic residues" evidence="2">
    <location>
        <begin position="234"/>
        <end position="243"/>
    </location>
</feature>
<feature type="compositionally biased region" description="Basic residues" evidence="2">
    <location>
        <begin position="244"/>
        <end position="256"/>
    </location>
</feature>
<feature type="compositionally biased region" description="Basic and acidic residues" evidence="2">
    <location>
        <begin position="266"/>
        <end position="297"/>
    </location>
</feature>
<keyword id="KW-0687">Ribonucleoprotein</keyword>
<keyword id="KW-0689">Ribosomal protein</keyword>
<protein>
    <recommendedName>
        <fullName evidence="1">Small ribosomal subunit protein uS2</fullName>
    </recommendedName>
    <alternativeName>
        <fullName evidence="3">30S ribosomal protein S2</fullName>
    </alternativeName>
</protein>
<proteinExistence type="inferred from homology"/>
<evidence type="ECO:0000255" key="1">
    <source>
        <dbReference type="HAMAP-Rule" id="MF_00291"/>
    </source>
</evidence>
<evidence type="ECO:0000256" key="2">
    <source>
        <dbReference type="SAM" id="MobiDB-lite"/>
    </source>
</evidence>
<evidence type="ECO:0000305" key="3"/>
<sequence length="313" mass="35318">MTDITMRQLLEAGVHFGHQTRYWNPKMAPYIYGARQKIHIINLEETLPAFRDALKFVKEVASKRGKVLFVGTKFAAREIVKEEATRCGMPYVDYRWLGGMLTNYKTIRQSIKRLKELEERLENEENLVGMTKKEILNLMREKEKLSANLAGIKNMGSLPDVLFVIDVEHERNAVQEANRLGITVLGIVDTNASPDNIDHVIPGNDDAIRAIRLYCKAIADTIIDARSVLELQKDEEAKEEKTKAKTTAKKVVTKKAKVAEKAQAAAEKKSEKPTTEKRPTKEAAETKETSEEPKTKEVQQPIEASKAEAEEGK</sequence>
<dbReference type="EMBL" id="CP000890">
    <property type="protein sequence ID" value="ABX78670.1"/>
    <property type="molecule type" value="Genomic_DNA"/>
</dbReference>
<dbReference type="SMR" id="A9N8R0"/>
<dbReference type="KEGG" id="cbs:COXBURSA331_A1545"/>
<dbReference type="HOGENOM" id="CLU_040318_2_0_6"/>
<dbReference type="GO" id="GO:0022627">
    <property type="term" value="C:cytosolic small ribosomal subunit"/>
    <property type="evidence" value="ECO:0007669"/>
    <property type="project" value="TreeGrafter"/>
</dbReference>
<dbReference type="GO" id="GO:0003735">
    <property type="term" value="F:structural constituent of ribosome"/>
    <property type="evidence" value="ECO:0007669"/>
    <property type="project" value="InterPro"/>
</dbReference>
<dbReference type="GO" id="GO:0006412">
    <property type="term" value="P:translation"/>
    <property type="evidence" value="ECO:0007669"/>
    <property type="project" value="UniProtKB-UniRule"/>
</dbReference>
<dbReference type="CDD" id="cd01425">
    <property type="entry name" value="RPS2"/>
    <property type="match status" value="1"/>
</dbReference>
<dbReference type="Gene3D" id="3.40.50.10490">
    <property type="entry name" value="Glucose-6-phosphate isomerase like protein, domain 1"/>
    <property type="match status" value="1"/>
</dbReference>
<dbReference type="Gene3D" id="1.10.287.610">
    <property type="entry name" value="Helix hairpin bin"/>
    <property type="match status" value="1"/>
</dbReference>
<dbReference type="HAMAP" id="MF_00291_B">
    <property type="entry name" value="Ribosomal_uS2_B"/>
    <property type="match status" value="1"/>
</dbReference>
<dbReference type="InterPro" id="IPR001865">
    <property type="entry name" value="Ribosomal_uS2"/>
</dbReference>
<dbReference type="InterPro" id="IPR005706">
    <property type="entry name" value="Ribosomal_uS2_bac/mit/plastid"/>
</dbReference>
<dbReference type="InterPro" id="IPR018130">
    <property type="entry name" value="Ribosomal_uS2_CS"/>
</dbReference>
<dbReference type="InterPro" id="IPR023591">
    <property type="entry name" value="Ribosomal_uS2_flav_dom_sf"/>
</dbReference>
<dbReference type="NCBIfam" id="TIGR01011">
    <property type="entry name" value="rpsB_bact"/>
    <property type="match status" value="1"/>
</dbReference>
<dbReference type="PANTHER" id="PTHR12534">
    <property type="entry name" value="30S RIBOSOMAL PROTEIN S2 PROKARYOTIC AND ORGANELLAR"/>
    <property type="match status" value="1"/>
</dbReference>
<dbReference type="PANTHER" id="PTHR12534:SF0">
    <property type="entry name" value="SMALL RIBOSOMAL SUBUNIT PROTEIN US2M"/>
    <property type="match status" value="1"/>
</dbReference>
<dbReference type="Pfam" id="PF00318">
    <property type="entry name" value="Ribosomal_S2"/>
    <property type="match status" value="1"/>
</dbReference>
<dbReference type="PRINTS" id="PR00395">
    <property type="entry name" value="RIBOSOMALS2"/>
</dbReference>
<dbReference type="SUPFAM" id="SSF52313">
    <property type="entry name" value="Ribosomal protein S2"/>
    <property type="match status" value="1"/>
</dbReference>
<dbReference type="PROSITE" id="PS00962">
    <property type="entry name" value="RIBOSOMAL_S2_1"/>
    <property type="match status" value="1"/>
</dbReference>